<reference key="1">
    <citation type="journal article" date="2000" name="Nature">
        <title>The genome sequence of the plant pathogen Xylella fastidiosa.</title>
        <authorList>
            <person name="Simpson A.J.G."/>
            <person name="Reinach F.C."/>
            <person name="Arruda P."/>
            <person name="Abreu F.A."/>
            <person name="Acencio M."/>
            <person name="Alvarenga R."/>
            <person name="Alves L.M.C."/>
            <person name="Araya J.E."/>
            <person name="Baia G.S."/>
            <person name="Baptista C.S."/>
            <person name="Barros M.H."/>
            <person name="Bonaccorsi E.D."/>
            <person name="Bordin S."/>
            <person name="Bove J.M."/>
            <person name="Briones M.R.S."/>
            <person name="Bueno M.R.P."/>
            <person name="Camargo A.A."/>
            <person name="Camargo L.E.A."/>
            <person name="Carraro D.M."/>
            <person name="Carrer H."/>
            <person name="Colauto N.B."/>
            <person name="Colombo C."/>
            <person name="Costa F.F."/>
            <person name="Costa M.C.R."/>
            <person name="Costa-Neto C.M."/>
            <person name="Coutinho L.L."/>
            <person name="Cristofani M."/>
            <person name="Dias-Neto E."/>
            <person name="Docena C."/>
            <person name="El-Dorry H."/>
            <person name="Facincani A.P."/>
            <person name="Ferreira A.J.S."/>
            <person name="Ferreira V.C.A."/>
            <person name="Ferro J.A."/>
            <person name="Fraga J.S."/>
            <person name="Franca S.C."/>
            <person name="Franco M.C."/>
            <person name="Frohme M."/>
            <person name="Furlan L.R."/>
            <person name="Garnier M."/>
            <person name="Goldman G.H."/>
            <person name="Goldman M.H.S."/>
            <person name="Gomes S.L."/>
            <person name="Gruber A."/>
            <person name="Ho P.L."/>
            <person name="Hoheisel J.D."/>
            <person name="Junqueira M.L."/>
            <person name="Kemper E.L."/>
            <person name="Kitajima J.P."/>
            <person name="Krieger J.E."/>
            <person name="Kuramae E.E."/>
            <person name="Laigret F."/>
            <person name="Lambais M.R."/>
            <person name="Leite L.C.C."/>
            <person name="Lemos E.G.M."/>
            <person name="Lemos M.V.F."/>
            <person name="Lopes S.A."/>
            <person name="Lopes C.R."/>
            <person name="Machado J.A."/>
            <person name="Machado M.A."/>
            <person name="Madeira A.M.B.N."/>
            <person name="Madeira H.M.F."/>
            <person name="Marino C.L."/>
            <person name="Marques M.V."/>
            <person name="Martins E.A.L."/>
            <person name="Martins E.M.F."/>
            <person name="Matsukuma A.Y."/>
            <person name="Menck C.F.M."/>
            <person name="Miracca E.C."/>
            <person name="Miyaki C.Y."/>
            <person name="Monteiro-Vitorello C.B."/>
            <person name="Moon D.H."/>
            <person name="Nagai M.A."/>
            <person name="Nascimento A.L.T.O."/>
            <person name="Netto L.E.S."/>
            <person name="Nhani A. Jr."/>
            <person name="Nobrega F.G."/>
            <person name="Nunes L.R."/>
            <person name="Oliveira M.A."/>
            <person name="de Oliveira M.C."/>
            <person name="de Oliveira R.C."/>
            <person name="Palmieri D.A."/>
            <person name="Paris A."/>
            <person name="Peixoto B.R."/>
            <person name="Pereira G.A.G."/>
            <person name="Pereira H.A. Jr."/>
            <person name="Pesquero J.B."/>
            <person name="Quaggio R.B."/>
            <person name="Roberto P.G."/>
            <person name="Rodrigues V."/>
            <person name="de Rosa A.J.M."/>
            <person name="de Rosa V.E. Jr."/>
            <person name="de Sa R.G."/>
            <person name="Santelli R.V."/>
            <person name="Sawasaki H.E."/>
            <person name="da Silva A.C.R."/>
            <person name="da Silva A.M."/>
            <person name="da Silva F.R."/>
            <person name="Silva W.A. Jr."/>
            <person name="da Silveira J.F."/>
            <person name="Silvestri M.L.Z."/>
            <person name="Siqueira W.J."/>
            <person name="de Souza A.A."/>
            <person name="de Souza A.P."/>
            <person name="Terenzi M.F."/>
            <person name="Truffi D."/>
            <person name="Tsai S.M."/>
            <person name="Tsuhako M.H."/>
            <person name="Vallada H."/>
            <person name="Van Sluys M.A."/>
            <person name="Verjovski-Almeida S."/>
            <person name="Vettore A.L."/>
            <person name="Zago M.A."/>
            <person name="Zatz M."/>
            <person name="Meidanis J."/>
            <person name="Setubal J.C."/>
        </authorList>
    </citation>
    <scope>NUCLEOTIDE SEQUENCE [LARGE SCALE GENOMIC DNA]</scope>
    <source>
        <strain>9a5c</strain>
    </source>
</reference>
<evidence type="ECO:0000255" key="1">
    <source>
        <dbReference type="HAMAP-Rule" id="MF_01365"/>
    </source>
</evidence>
<evidence type="ECO:0000305" key="2"/>
<dbReference type="EMBL" id="AE003849">
    <property type="protein sequence ID" value="AAF83977.1"/>
    <property type="molecule type" value="Genomic_DNA"/>
</dbReference>
<dbReference type="PIR" id="H82713">
    <property type="entry name" value="H82713"/>
</dbReference>
<dbReference type="RefSeq" id="WP_010893681.1">
    <property type="nucleotide sequence ID" value="NC_002488.3"/>
</dbReference>
<dbReference type="SMR" id="Q9PE61"/>
<dbReference type="STRING" id="160492.XF_1167"/>
<dbReference type="KEGG" id="xfa:XF_1167"/>
<dbReference type="eggNOG" id="COG0097">
    <property type="taxonomic scope" value="Bacteria"/>
</dbReference>
<dbReference type="HOGENOM" id="CLU_065464_1_2_6"/>
<dbReference type="Proteomes" id="UP000000812">
    <property type="component" value="Chromosome"/>
</dbReference>
<dbReference type="GO" id="GO:0022625">
    <property type="term" value="C:cytosolic large ribosomal subunit"/>
    <property type="evidence" value="ECO:0007669"/>
    <property type="project" value="TreeGrafter"/>
</dbReference>
<dbReference type="GO" id="GO:0019843">
    <property type="term" value="F:rRNA binding"/>
    <property type="evidence" value="ECO:0007669"/>
    <property type="project" value="UniProtKB-UniRule"/>
</dbReference>
<dbReference type="GO" id="GO:0003735">
    <property type="term" value="F:structural constituent of ribosome"/>
    <property type="evidence" value="ECO:0007669"/>
    <property type="project" value="InterPro"/>
</dbReference>
<dbReference type="GO" id="GO:0002181">
    <property type="term" value="P:cytoplasmic translation"/>
    <property type="evidence" value="ECO:0007669"/>
    <property type="project" value="TreeGrafter"/>
</dbReference>
<dbReference type="FunFam" id="3.90.930.12:FF:000001">
    <property type="entry name" value="50S ribosomal protein L6"/>
    <property type="match status" value="1"/>
</dbReference>
<dbReference type="Gene3D" id="3.90.930.12">
    <property type="entry name" value="Ribosomal protein L6, alpha-beta domain"/>
    <property type="match status" value="2"/>
</dbReference>
<dbReference type="HAMAP" id="MF_01365_B">
    <property type="entry name" value="Ribosomal_uL6_B"/>
    <property type="match status" value="1"/>
</dbReference>
<dbReference type="InterPro" id="IPR000702">
    <property type="entry name" value="Ribosomal_uL6-like"/>
</dbReference>
<dbReference type="InterPro" id="IPR036789">
    <property type="entry name" value="Ribosomal_uL6-like_a/b-dom_sf"/>
</dbReference>
<dbReference type="InterPro" id="IPR020040">
    <property type="entry name" value="Ribosomal_uL6_a/b-dom"/>
</dbReference>
<dbReference type="InterPro" id="IPR019906">
    <property type="entry name" value="Ribosomal_uL6_bac-type"/>
</dbReference>
<dbReference type="InterPro" id="IPR002358">
    <property type="entry name" value="Ribosomal_uL6_CS"/>
</dbReference>
<dbReference type="NCBIfam" id="TIGR03654">
    <property type="entry name" value="L6_bact"/>
    <property type="match status" value="1"/>
</dbReference>
<dbReference type="PANTHER" id="PTHR11655">
    <property type="entry name" value="60S/50S RIBOSOMAL PROTEIN L6/L9"/>
    <property type="match status" value="1"/>
</dbReference>
<dbReference type="PANTHER" id="PTHR11655:SF14">
    <property type="entry name" value="LARGE RIBOSOMAL SUBUNIT PROTEIN UL6M"/>
    <property type="match status" value="1"/>
</dbReference>
<dbReference type="Pfam" id="PF00347">
    <property type="entry name" value="Ribosomal_L6"/>
    <property type="match status" value="2"/>
</dbReference>
<dbReference type="PIRSF" id="PIRSF002162">
    <property type="entry name" value="Ribosomal_L6"/>
    <property type="match status" value="1"/>
</dbReference>
<dbReference type="PRINTS" id="PR00059">
    <property type="entry name" value="RIBOSOMALL6"/>
</dbReference>
<dbReference type="SUPFAM" id="SSF56053">
    <property type="entry name" value="Ribosomal protein L6"/>
    <property type="match status" value="2"/>
</dbReference>
<dbReference type="PROSITE" id="PS00525">
    <property type="entry name" value="RIBOSOMAL_L6_1"/>
    <property type="match status" value="1"/>
</dbReference>
<gene>
    <name evidence="1" type="primary">rplF</name>
    <name type="ordered locus">XF_1167</name>
</gene>
<comment type="function">
    <text evidence="1">This protein binds to the 23S rRNA, and is important in its secondary structure. It is located near the subunit interface in the base of the L7/L12 stalk, and near the tRNA binding site of the peptidyltransferase center.</text>
</comment>
<comment type="subunit">
    <text evidence="1">Part of the 50S ribosomal subunit.</text>
</comment>
<comment type="similarity">
    <text evidence="1">Belongs to the universal ribosomal protein uL6 family.</text>
</comment>
<organism>
    <name type="scientific">Xylella fastidiosa (strain 9a5c)</name>
    <dbReference type="NCBI Taxonomy" id="160492"/>
    <lineage>
        <taxon>Bacteria</taxon>
        <taxon>Pseudomonadati</taxon>
        <taxon>Pseudomonadota</taxon>
        <taxon>Gammaproteobacteria</taxon>
        <taxon>Lysobacterales</taxon>
        <taxon>Lysobacteraceae</taxon>
        <taxon>Xylella</taxon>
    </lineage>
</organism>
<feature type="chain" id="PRO_0000260980" description="Large ribosomal subunit protein uL6">
    <location>
        <begin position="1"/>
        <end position="175"/>
    </location>
</feature>
<sequence>MSRVAKKPISVPKGVEVSVRSDMLTVKGVKGVLTFPKSDNVNVVVDGDILTLSANDPSHVSLAGTVRAILSNMIKGVSIGFERKLELVGVGYRASMQGENLNLSLGFSHPLVFVPPEGITLLTPSQTEVVVQGIDKQRVGEVAAKIRSFRPPEPYKGKGLKYAAEAIMRKEAKKA</sequence>
<proteinExistence type="inferred from homology"/>
<protein>
    <recommendedName>
        <fullName evidence="1">Large ribosomal subunit protein uL6</fullName>
    </recommendedName>
    <alternativeName>
        <fullName evidence="2">50S ribosomal protein L6</fullName>
    </alternativeName>
</protein>
<accession>Q9PE61</accession>
<name>RL6_XYLFA</name>
<keyword id="KW-0687">Ribonucleoprotein</keyword>
<keyword id="KW-0689">Ribosomal protein</keyword>
<keyword id="KW-0694">RNA-binding</keyword>
<keyword id="KW-0699">rRNA-binding</keyword>